<organism>
    <name type="scientific">Escherichia coli O127:H6 (strain E2348/69 / EPEC)</name>
    <dbReference type="NCBI Taxonomy" id="574521"/>
    <lineage>
        <taxon>Bacteria</taxon>
        <taxon>Pseudomonadati</taxon>
        <taxon>Pseudomonadota</taxon>
        <taxon>Gammaproteobacteria</taxon>
        <taxon>Enterobacterales</taxon>
        <taxon>Enterobacteriaceae</taxon>
        <taxon>Escherichia</taxon>
    </lineage>
</organism>
<sequence>MSLFPVIVVFGLSFPPIFFELLLSLAIFWLVRRVLVPTGIYDFVWHPALFNTALYCCLFYLISRLFV</sequence>
<reference key="1">
    <citation type="journal article" date="2009" name="J. Bacteriol.">
        <title>Complete genome sequence and comparative genome analysis of enteropathogenic Escherichia coli O127:H6 strain E2348/69.</title>
        <authorList>
            <person name="Iguchi A."/>
            <person name="Thomson N.R."/>
            <person name="Ogura Y."/>
            <person name="Saunders D."/>
            <person name="Ooka T."/>
            <person name="Henderson I.R."/>
            <person name="Harris D."/>
            <person name="Asadulghani M."/>
            <person name="Kurokawa K."/>
            <person name="Dean P."/>
            <person name="Kenny B."/>
            <person name="Quail M.A."/>
            <person name="Thurston S."/>
            <person name="Dougan G."/>
            <person name="Hayashi T."/>
            <person name="Parkhill J."/>
            <person name="Frankel G."/>
        </authorList>
    </citation>
    <scope>NUCLEOTIDE SEQUENCE [LARGE SCALE GENOMIC DNA]</scope>
    <source>
        <strain>E2348/69 / EPEC</strain>
    </source>
</reference>
<keyword id="KW-1003">Cell membrane</keyword>
<keyword id="KW-0472">Membrane</keyword>
<keyword id="KW-1185">Reference proteome</keyword>
<keyword id="KW-0812">Transmembrane</keyword>
<keyword id="KW-1133">Transmembrane helix</keyword>
<feature type="chain" id="PRO_1000185283" description="Protein AaeX">
    <location>
        <begin position="1"/>
        <end position="67"/>
    </location>
</feature>
<feature type="transmembrane region" description="Helical" evidence="1">
    <location>
        <begin position="3"/>
        <end position="23"/>
    </location>
</feature>
<feature type="transmembrane region" description="Helical" evidence="1">
    <location>
        <begin position="43"/>
        <end position="63"/>
    </location>
</feature>
<gene>
    <name evidence="1" type="primary">aaeX</name>
    <name type="ordered locus">E2348C_3513</name>
</gene>
<dbReference type="EMBL" id="FM180568">
    <property type="protein sequence ID" value="CAS11061.1"/>
    <property type="molecule type" value="Genomic_DNA"/>
</dbReference>
<dbReference type="RefSeq" id="WP_000051841.1">
    <property type="nucleotide sequence ID" value="NC_011601.1"/>
</dbReference>
<dbReference type="GeneID" id="93778743"/>
<dbReference type="KEGG" id="ecg:E2348C_3513"/>
<dbReference type="HOGENOM" id="CLU_188292_0_0_6"/>
<dbReference type="Proteomes" id="UP000008205">
    <property type="component" value="Chromosome"/>
</dbReference>
<dbReference type="GO" id="GO:0005886">
    <property type="term" value="C:plasma membrane"/>
    <property type="evidence" value="ECO:0007669"/>
    <property type="project" value="UniProtKB-SubCell"/>
</dbReference>
<dbReference type="HAMAP" id="MF_01546">
    <property type="entry name" value="AaeX"/>
    <property type="match status" value="1"/>
</dbReference>
<dbReference type="InterPro" id="IPR012451">
    <property type="entry name" value="DUF1656"/>
</dbReference>
<dbReference type="NCBIfam" id="NF008615">
    <property type="entry name" value="PRK11594.1"/>
    <property type="match status" value="1"/>
</dbReference>
<dbReference type="Pfam" id="PF07869">
    <property type="entry name" value="DUF1656"/>
    <property type="match status" value="1"/>
</dbReference>
<comment type="subcellular location">
    <subcellularLocation>
        <location evidence="1">Cell membrane</location>
        <topology evidence="1">Multi-pass membrane protein</topology>
    </subcellularLocation>
</comment>
<comment type="induction">
    <text evidence="1">Positively coregulated with aaeA and aaeB by AaeR.</text>
</comment>
<comment type="similarity">
    <text evidence="1">Belongs to the AaeX family.</text>
</comment>
<protein>
    <recommendedName>
        <fullName evidence="1">Protein AaeX</fullName>
    </recommendedName>
</protein>
<name>AAEX_ECO27</name>
<proteinExistence type="inferred from homology"/>
<accession>B7UJX4</accession>
<evidence type="ECO:0000255" key="1">
    <source>
        <dbReference type="HAMAP-Rule" id="MF_01546"/>
    </source>
</evidence>